<proteinExistence type="evidence at transcript level"/>
<comment type="function">
    <text evidence="1">Probable molecular chaperone that assists the folding of proteins upon ATP hydrolysis. Plays a role in the assembly of BBSome, a complex involved in ciliogenesis regulating transports vesicles to the cilia. Involved in adipogenic differentiation.</text>
</comment>
<comment type="subunit">
    <text evidence="1">Component of a complex composed at least of MKKS, BBS10, BBS12, TCP1, CCT2, CCT3, CCT4, CCT5 and CCT8.</text>
</comment>
<comment type="subcellular location">
    <subcellularLocation>
        <location evidence="1">Cell projection</location>
        <location evidence="1">Cilium</location>
    </subcellularLocation>
    <text evidence="1">Located within the basal body of the primary cilium of differentiating preadipocytes.</text>
</comment>
<comment type="similarity">
    <text evidence="2">Belongs to the TCP-1 chaperonin family.</text>
</comment>
<comment type="sequence caution" evidence="2">
    <conflict type="miscellaneous discrepancy">
        <sequence resource="EMBL-CDS" id="BAB23682"/>
    </conflict>
    <text>Intron retention. Several introns.</text>
</comment>
<dbReference type="EMBL" id="AK004937">
    <property type="protein sequence ID" value="BAB23682.1"/>
    <property type="status" value="ALT_SEQ"/>
    <property type="molecule type" value="mRNA"/>
</dbReference>
<dbReference type="CCDS" id="CCDS48689.1"/>
<dbReference type="RefSeq" id="NP_082190.1">
    <property type="nucleotide sequence ID" value="NM_027914.1"/>
</dbReference>
<dbReference type="DIP" id="DIP-60356N"/>
<dbReference type="FunCoup" id="Q9DBI2">
    <property type="interactions" value="123"/>
</dbReference>
<dbReference type="IntAct" id="Q9DBI2">
    <property type="interactions" value="4"/>
</dbReference>
<dbReference type="STRING" id="10090.ENSMUSP00000049387"/>
<dbReference type="iPTMnet" id="Q9DBI2"/>
<dbReference type="PhosphoSitePlus" id="Q9DBI2"/>
<dbReference type="PaxDb" id="10090-ENSMUSP00000049387"/>
<dbReference type="PeptideAtlas" id="Q9DBI2"/>
<dbReference type="ProteomicsDB" id="273731"/>
<dbReference type="Antibodypedia" id="29650">
    <property type="antibodies" value="163 antibodies from 26 providers"/>
</dbReference>
<dbReference type="Ensembl" id="ENSMUST00000040454.5">
    <property type="protein sequence ID" value="ENSMUSP00000049387.4"/>
    <property type="gene ID" value="ENSMUSG00000035759.5"/>
</dbReference>
<dbReference type="GeneID" id="71769"/>
<dbReference type="KEGG" id="mmu:71769"/>
<dbReference type="UCSC" id="uc011xnf.1">
    <property type="organism name" value="mouse"/>
</dbReference>
<dbReference type="AGR" id="MGI:1919019"/>
<dbReference type="CTD" id="79738"/>
<dbReference type="MGI" id="MGI:1919019">
    <property type="gene designation" value="Bbs10"/>
</dbReference>
<dbReference type="VEuPathDB" id="HostDB:ENSMUSG00000035759"/>
<dbReference type="eggNOG" id="KOG0357">
    <property type="taxonomic scope" value="Eukaryota"/>
</dbReference>
<dbReference type="eggNOG" id="KOG0360">
    <property type="taxonomic scope" value="Eukaryota"/>
</dbReference>
<dbReference type="GeneTree" id="ENSGT00390000002417"/>
<dbReference type="HOGENOM" id="CLU_028678_0_0_1"/>
<dbReference type="InParanoid" id="Q9DBI2"/>
<dbReference type="OMA" id="YFFKCMT"/>
<dbReference type="OrthoDB" id="9393833at2759"/>
<dbReference type="PhylomeDB" id="Q9DBI2"/>
<dbReference type="TreeFam" id="TF335867"/>
<dbReference type="BioGRID-ORCS" id="71769">
    <property type="hits" value="3 hits in 78 CRISPR screens"/>
</dbReference>
<dbReference type="ChiTaRS" id="Bbs10">
    <property type="organism name" value="mouse"/>
</dbReference>
<dbReference type="PRO" id="PR:Q9DBI2"/>
<dbReference type="Proteomes" id="UP000000589">
    <property type="component" value="Chromosome 10"/>
</dbReference>
<dbReference type="RNAct" id="Q9DBI2">
    <property type="molecule type" value="protein"/>
</dbReference>
<dbReference type="Bgee" id="ENSMUSG00000035759">
    <property type="expression patterns" value="Expressed in spermatocyte and 167 other cell types or tissues"/>
</dbReference>
<dbReference type="GO" id="GO:0005929">
    <property type="term" value="C:cilium"/>
    <property type="evidence" value="ECO:0007669"/>
    <property type="project" value="UniProtKB-SubCell"/>
</dbReference>
<dbReference type="GO" id="GO:0005524">
    <property type="term" value="F:ATP binding"/>
    <property type="evidence" value="ECO:0007669"/>
    <property type="project" value="UniProtKB-KW"/>
</dbReference>
<dbReference type="GO" id="GO:0061629">
    <property type="term" value="F:RNA polymerase II-specific DNA-binding transcription factor binding"/>
    <property type="evidence" value="ECO:0000266"/>
    <property type="project" value="MGI"/>
</dbReference>
<dbReference type="GO" id="GO:0051131">
    <property type="term" value="P:chaperone-mediated protein complex assembly"/>
    <property type="evidence" value="ECO:0000266"/>
    <property type="project" value="MGI"/>
</dbReference>
<dbReference type="GO" id="GO:1904390">
    <property type="term" value="P:cone retinal bipolar cell differentiation"/>
    <property type="evidence" value="ECO:0000315"/>
    <property type="project" value="MGI"/>
</dbReference>
<dbReference type="GO" id="GO:0043524">
    <property type="term" value="P:negative regulation of neuron apoptotic process"/>
    <property type="evidence" value="ECO:0000315"/>
    <property type="project" value="MGI"/>
</dbReference>
<dbReference type="GO" id="GO:0019228">
    <property type="term" value="P:neuronal action potential"/>
    <property type="evidence" value="ECO:0000315"/>
    <property type="project" value="MGI"/>
</dbReference>
<dbReference type="GO" id="GO:1905515">
    <property type="term" value="P:non-motile cilium assembly"/>
    <property type="evidence" value="ECO:0007669"/>
    <property type="project" value="Ensembl"/>
</dbReference>
<dbReference type="GO" id="GO:0046530">
    <property type="term" value="P:photoreceptor cell differentiation"/>
    <property type="evidence" value="ECO:0000315"/>
    <property type="project" value="MGI"/>
</dbReference>
<dbReference type="GO" id="GO:0045494">
    <property type="term" value="P:photoreceptor cell maintenance"/>
    <property type="evidence" value="ECO:0007669"/>
    <property type="project" value="Ensembl"/>
</dbReference>
<dbReference type="GO" id="GO:0008104">
    <property type="term" value="P:protein localization"/>
    <property type="evidence" value="ECO:0000315"/>
    <property type="project" value="MGI"/>
</dbReference>
<dbReference type="GO" id="GO:0043254">
    <property type="term" value="P:regulation of protein-containing complex assembly"/>
    <property type="evidence" value="ECO:0000266"/>
    <property type="project" value="MGI"/>
</dbReference>
<dbReference type="GO" id="GO:0034976">
    <property type="term" value="P:response to endoplasmic reticulum stress"/>
    <property type="evidence" value="ECO:0000315"/>
    <property type="project" value="MGI"/>
</dbReference>
<dbReference type="GO" id="GO:0009416">
    <property type="term" value="P:response to light stimulus"/>
    <property type="evidence" value="ECO:0000315"/>
    <property type="project" value="MGI"/>
</dbReference>
<dbReference type="GO" id="GO:0060041">
    <property type="term" value="P:retina development in camera-type eye"/>
    <property type="evidence" value="ECO:0000315"/>
    <property type="project" value="MGI"/>
</dbReference>
<dbReference type="GO" id="GO:0042670">
    <property type="term" value="P:retinal cone cell differentiation"/>
    <property type="evidence" value="ECO:0000315"/>
    <property type="project" value="MGI"/>
</dbReference>
<dbReference type="GO" id="GO:0060221">
    <property type="term" value="P:retinal rod cell differentiation"/>
    <property type="evidence" value="ECO:0000315"/>
    <property type="project" value="MGI"/>
</dbReference>
<dbReference type="GO" id="GO:0007601">
    <property type="term" value="P:visual perception"/>
    <property type="evidence" value="ECO:0000315"/>
    <property type="project" value="MGI"/>
</dbReference>
<dbReference type="FunFam" id="1.10.560.10:FF:000040">
    <property type="entry name" value="Bardet-Biedl syndrome 10 protein"/>
    <property type="match status" value="1"/>
</dbReference>
<dbReference type="Gene3D" id="3.50.7.10">
    <property type="entry name" value="GroEL"/>
    <property type="match status" value="1"/>
</dbReference>
<dbReference type="Gene3D" id="1.10.560.10">
    <property type="entry name" value="GroEL-like equatorial domain"/>
    <property type="match status" value="2"/>
</dbReference>
<dbReference type="Gene3D" id="3.30.260.10">
    <property type="entry name" value="TCP-1-like chaperonin intermediate domain"/>
    <property type="match status" value="1"/>
</dbReference>
<dbReference type="InterPro" id="IPR042619">
    <property type="entry name" value="BBS10"/>
</dbReference>
<dbReference type="InterPro" id="IPR002423">
    <property type="entry name" value="Cpn60/GroEL/TCP-1"/>
</dbReference>
<dbReference type="InterPro" id="IPR027409">
    <property type="entry name" value="GroEL-like_apical_dom_sf"/>
</dbReference>
<dbReference type="InterPro" id="IPR027413">
    <property type="entry name" value="GROEL-like_equatorial_sf"/>
</dbReference>
<dbReference type="InterPro" id="IPR027410">
    <property type="entry name" value="TCP-1-like_intermed_sf"/>
</dbReference>
<dbReference type="PANTHER" id="PTHR14667">
    <property type="entry name" value="BARDET-BIEDL SYNDROME 10 PROTEIN"/>
    <property type="match status" value="1"/>
</dbReference>
<dbReference type="PANTHER" id="PTHR14667:SF2">
    <property type="entry name" value="BARDET-BIEDL SYNDROME 10 PROTEIN"/>
    <property type="match status" value="1"/>
</dbReference>
<dbReference type="Pfam" id="PF00118">
    <property type="entry name" value="Cpn60_TCP1"/>
    <property type="match status" value="1"/>
</dbReference>
<dbReference type="SUPFAM" id="SSF48592">
    <property type="entry name" value="GroEL equatorial domain-like"/>
    <property type="match status" value="1"/>
</dbReference>
<feature type="chain" id="PRO_0000235273" description="BBSome complex assembly protein BBS10">
    <location>
        <begin position="1"/>
        <end position="713"/>
    </location>
</feature>
<name>BBS10_MOUSE</name>
<reference key="1">
    <citation type="journal article" date="2005" name="Science">
        <title>The transcriptional landscape of the mammalian genome.</title>
        <authorList>
            <person name="Carninci P."/>
            <person name="Kasukawa T."/>
            <person name="Katayama S."/>
            <person name="Gough J."/>
            <person name="Frith M.C."/>
            <person name="Maeda N."/>
            <person name="Oyama R."/>
            <person name="Ravasi T."/>
            <person name="Lenhard B."/>
            <person name="Wells C."/>
            <person name="Kodzius R."/>
            <person name="Shimokawa K."/>
            <person name="Bajic V.B."/>
            <person name="Brenner S.E."/>
            <person name="Batalov S."/>
            <person name="Forrest A.R."/>
            <person name="Zavolan M."/>
            <person name="Davis M.J."/>
            <person name="Wilming L.G."/>
            <person name="Aidinis V."/>
            <person name="Allen J.E."/>
            <person name="Ambesi-Impiombato A."/>
            <person name="Apweiler R."/>
            <person name="Aturaliya R.N."/>
            <person name="Bailey T.L."/>
            <person name="Bansal M."/>
            <person name="Baxter L."/>
            <person name="Beisel K.W."/>
            <person name="Bersano T."/>
            <person name="Bono H."/>
            <person name="Chalk A.M."/>
            <person name="Chiu K.P."/>
            <person name="Choudhary V."/>
            <person name="Christoffels A."/>
            <person name="Clutterbuck D.R."/>
            <person name="Crowe M.L."/>
            <person name="Dalla E."/>
            <person name="Dalrymple B.P."/>
            <person name="de Bono B."/>
            <person name="Della Gatta G."/>
            <person name="di Bernardo D."/>
            <person name="Down T."/>
            <person name="Engstrom P."/>
            <person name="Fagiolini M."/>
            <person name="Faulkner G."/>
            <person name="Fletcher C.F."/>
            <person name="Fukushima T."/>
            <person name="Furuno M."/>
            <person name="Futaki S."/>
            <person name="Gariboldi M."/>
            <person name="Georgii-Hemming P."/>
            <person name="Gingeras T.R."/>
            <person name="Gojobori T."/>
            <person name="Green R.E."/>
            <person name="Gustincich S."/>
            <person name="Harbers M."/>
            <person name="Hayashi Y."/>
            <person name="Hensch T.K."/>
            <person name="Hirokawa N."/>
            <person name="Hill D."/>
            <person name="Huminiecki L."/>
            <person name="Iacono M."/>
            <person name="Ikeo K."/>
            <person name="Iwama A."/>
            <person name="Ishikawa T."/>
            <person name="Jakt M."/>
            <person name="Kanapin A."/>
            <person name="Katoh M."/>
            <person name="Kawasawa Y."/>
            <person name="Kelso J."/>
            <person name="Kitamura H."/>
            <person name="Kitano H."/>
            <person name="Kollias G."/>
            <person name="Krishnan S.P."/>
            <person name="Kruger A."/>
            <person name="Kummerfeld S.K."/>
            <person name="Kurochkin I.V."/>
            <person name="Lareau L.F."/>
            <person name="Lazarevic D."/>
            <person name="Lipovich L."/>
            <person name="Liu J."/>
            <person name="Liuni S."/>
            <person name="McWilliam S."/>
            <person name="Madan Babu M."/>
            <person name="Madera M."/>
            <person name="Marchionni L."/>
            <person name="Matsuda H."/>
            <person name="Matsuzawa S."/>
            <person name="Miki H."/>
            <person name="Mignone F."/>
            <person name="Miyake S."/>
            <person name="Morris K."/>
            <person name="Mottagui-Tabar S."/>
            <person name="Mulder N."/>
            <person name="Nakano N."/>
            <person name="Nakauchi H."/>
            <person name="Ng P."/>
            <person name="Nilsson R."/>
            <person name="Nishiguchi S."/>
            <person name="Nishikawa S."/>
            <person name="Nori F."/>
            <person name="Ohara O."/>
            <person name="Okazaki Y."/>
            <person name="Orlando V."/>
            <person name="Pang K.C."/>
            <person name="Pavan W.J."/>
            <person name="Pavesi G."/>
            <person name="Pesole G."/>
            <person name="Petrovsky N."/>
            <person name="Piazza S."/>
            <person name="Reed J."/>
            <person name="Reid J.F."/>
            <person name="Ring B.Z."/>
            <person name="Ringwald M."/>
            <person name="Rost B."/>
            <person name="Ruan Y."/>
            <person name="Salzberg S.L."/>
            <person name="Sandelin A."/>
            <person name="Schneider C."/>
            <person name="Schoenbach C."/>
            <person name="Sekiguchi K."/>
            <person name="Semple C.A."/>
            <person name="Seno S."/>
            <person name="Sessa L."/>
            <person name="Sheng Y."/>
            <person name="Shibata Y."/>
            <person name="Shimada H."/>
            <person name="Shimada K."/>
            <person name="Silva D."/>
            <person name="Sinclair B."/>
            <person name="Sperling S."/>
            <person name="Stupka E."/>
            <person name="Sugiura K."/>
            <person name="Sultana R."/>
            <person name="Takenaka Y."/>
            <person name="Taki K."/>
            <person name="Tammoja K."/>
            <person name="Tan S.L."/>
            <person name="Tang S."/>
            <person name="Taylor M.S."/>
            <person name="Tegner J."/>
            <person name="Teichmann S.A."/>
            <person name="Ueda H.R."/>
            <person name="van Nimwegen E."/>
            <person name="Verardo R."/>
            <person name="Wei C.L."/>
            <person name="Yagi K."/>
            <person name="Yamanishi H."/>
            <person name="Zabarovsky E."/>
            <person name="Zhu S."/>
            <person name="Zimmer A."/>
            <person name="Hide W."/>
            <person name="Bult C."/>
            <person name="Grimmond S.M."/>
            <person name="Teasdale R.D."/>
            <person name="Liu E.T."/>
            <person name="Brusic V."/>
            <person name="Quackenbush J."/>
            <person name="Wahlestedt C."/>
            <person name="Mattick J.S."/>
            <person name="Hume D.A."/>
            <person name="Kai C."/>
            <person name="Sasaki D."/>
            <person name="Tomaru Y."/>
            <person name="Fukuda S."/>
            <person name="Kanamori-Katayama M."/>
            <person name="Suzuki M."/>
            <person name="Aoki J."/>
            <person name="Arakawa T."/>
            <person name="Iida J."/>
            <person name="Imamura K."/>
            <person name="Itoh M."/>
            <person name="Kato T."/>
            <person name="Kawaji H."/>
            <person name="Kawagashira N."/>
            <person name="Kawashima T."/>
            <person name="Kojima M."/>
            <person name="Kondo S."/>
            <person name="Konno H."/>
            <person name="Nakano K."/>
            <person name="Ninomiya N."/>
            <person name="Nishio T."/>
            <person name="Okada M."/>
            <person name="Plessy C."/>
            <person name="Shibata K."/>
            <person name="Shiraki T."/>
            <person name="Suzuki S."/>
            <person name="Tagami M."/>
            <person name="Waki K."/>
            <person name="Watahiki A."/>
            <person name="Okamura-Oho Y."/>
            <person name="Suzuki H."/>
            <person name="Kawai J."/>
            <person name="Hayashizaki Y."/>
        </authorList>
    </citation>
    <scope>NUCLEOTIDE SEQUENCE [LARGE SCALE MRNA]</scope>
    <source>
        <strain>C57BL/6J</strain>
        <tissue>Liver</tissue>
    </source>
</reference>
<evidence type="ECO:0000250" key="1">
    <source>
        <dbReference type="UniProtKB" id="Q8TAM1"/>
    </source>
</evidence>
<evidence type="ECO:0000305" key="2"/>
<organism>
    <name type="scientific">Mus musculus</name>
    <name type="common">Mouse</name>
    <dbReference type="NCBI Taxonomy" id="10090"/>
    <lineage>
        <taxon>Eukaryota</taxon>
        <taxon>Metazoa</taxon>
        <taxon>Chordata</taxon>
        <taxon>Craniata</taxon>
        <taxon>Vertebrata</taxon>
        <taxon>Euteleostomi</taxon>
        <taxon>Mammalia</taxon>
        <taxon>Eutheria</taxon>
        <taxon>Euarchontoglires</taxon>
        <taxon>Glires</taxon>
        <taxon>Rodentia</taxon>
        <taxon>Myomorpha</taxon>
        <taxon>Muroidea</taxon>
        <taxon>Muridae</taxon>
        <taxon>Murinae</taxon>
        <taxon>Mus</taxon>
        <taxon>Mus</taxon>
    </lineage>
</organism>
<protein>
    <recommendedName>
        <fullName evidence="2">BBSome complex assembly protein BBS10</fullName>
    </recommendedName>
    <alternativeName>
        <fullName>Bardet-Biedl syndrome 10 protein homolog</fullName>
    </alternativeName>
</protein>
<sequence>MASQGSVTAALRVAEVLESIANRCVGPEGGQVLCTKPTGEVLLSRDGGCLLEALHLEHPLARMIVACVSSHLKKTGDGAKTFIIFLCHLLRGLHAIGEKGKDSFTSENIQSHERHWKNCCQWKSISQALQTFQTQTLGCIVDRSLSRHYLSVFSSSTEGRKLCRHSLELLLEAYFCGRVGRNNHRFISQLMCDYVFKCMACESGVEVFELLDHCFAELNVGVTGLPVSDSRIIDGLVLPRDFSMYCPADGDIRMVIVTEILQPQFSSAGSEFVLNSETQFQASQCWITDRTKTVMNHLRGQNVKLLLTSVKQPDLVIYCARLNSISVVECLSAEEVSLVQRITGLSPCVLPEVASQCEISDSTLVKFCKPLILRSKRYVHLGLISTCAFIPHSMVLCGPVLGLVEQHERAFHGAFKMLRQLFTDLDLNYIIQTKQQCNPSPLAYDNSRERNHSPETDKYQDIVAKSKNKLETQTHLEVYSGLGASDTELRAGKPWSAHKKTPIAPSQTDEMLKCLPPERSGIIDNCDLSIENHSTGNPTAEDTGTEISFEHLQVSDNAGKGYTLPVMRKSLDTCTCQGYCSSTVPAGCVLPVGGSFEILMSYYLLSYAKQCRQSDETVISMLIADALLGIPKILYKPKKGKDSFPHIYMRSLHALQASQPMVSGQSGFESVAGKYQLLTSVLQCLMKILTIDLIINIKRQPQKTADQESEDEF</sequence>
<keyword id="KW-0067">ATP-binding</keyword>
<keyword id="KW-0966">Cell projection</keyword>
<keyword id="KW-0143">Chaperone</keyword>
<keyword id="KW-0547">Nucleotide-binding</keyword>
<keyword id="KW-1185">Reference proteome</keyword>
<gene>
    <name type="primary">Bbs10</name>
</gene>
<accession>Q9DBI2</accession>